<evidence type="ECO:0000255" key="1">
    <source>
        <dbReference type="HAMAP-Rule" id="MF_00041"/>
    </source>
</evidence>
<sequence>MLKIFNTLTRQKEEFKPIHAGEVGMYVCGITVYDLCHIGHGRTFVAFDVVARYLRFLGYKLKYVRNITDIDDKIIKRANENGESFVALVDRMIAEMHQDFDALNILRPDSEPRATHHIQEIIELTRTLIEKGHAYVADNGDVMFDVPTDPTYGQLSRQDLEQLQAGARVDVVDVKRNPMDFVLWKMSKEGEPSWPSPWGEGRPGWHIECSAMNCKQLGNHFDIHGGGSDLMFPHHENEIAQSTCAHDGEYVNYWMHSGMVMVDREKMSKSLGNFFTVRDVLKYYDAETVRYFLMSGHYRSQLNYSEENLKQARASLERLYTALRGTDKSAAPAGGEAFEARFVEAMNDDFNTPEAYSVLFDMAREVNRLKGEDMTAANAMASHLRKISGVLGLLEQEPDVFLQSGAQADDGEVAEIEALIQQRLDARKAKDWAAADAARDRLAEMGIILEDGPQGTTWRRK</sequence>
<comment type="catalytic activity">
    <reaction evidence="1">
        <text>tRNA(Cys) + L-cysteine + ATP = L-cysteinyl-tRNA(Cys) + AMP + diphosphate</text>
        <dbReference type="Rhea" id="RHEA:17773"/>
        <dbReference type="Rhea" id="RHEA-COMP:9661"/>
        <dbReference type="Rhea" id="RHEA-COMP:9679"/>
        <dbReference type="ChEBI" id="CHEBI:30616"/>
        <dbReference type="ChEBI" id="CHEBI:33019"/>
        <dbReference type="ChEBI" id="CHEBI:35235"/>
        <dbReference type="ChEBI" id="CHEBI:78442"/>
        <dbReference type="ChEBI" id="CHEBI:78517"/>
        <dbReference type="ChEBI" id="CHEBI:456215"/>
        <dbReference type="EC" id="6.1.1.16"/>
    </reaction>
</comment>
<comment type="cofactor">
    <cofactor evidence="1">
        <name>Zn(2+)</name>
        <dbReference type="ChEBI" id="CHEBI:29105"/>
    </cofactor>
    <text evidence="1">Binds 1 zinc ion per subunit.</text>
</comment>
<comment type="subunit">
    <text evidence="1">Monomer.</text>
</comment>
<comment type="subcellular location">
    <subcellularLocation>
        <location evidence="1">Cytoplasm</location>
    </subcellularLocation>
</comment>
<comment type="similarity">
    <text evidence="1">Belongs to the class-I aminoacyl-tRNA synthetase family.</text>
</comment>
<accession>B5EYD7</accession>
<dbReference type="EC" id="6.1.1.16" evidence="1"/>
<dbReference type="EMBL" id="CP001138">
    <property type="protein sequence ID" value="ACH52504.1"/>
    <property type="molecule type" value="Genomic_DNA"/>
</dbReference>
<dbReference type="RefSeq" id="WP_000912376.1">
    <property type="nucleotide sequence ID" value="NC_011149.1"/>
</dbReference>
<dbReference type="SMR" id="B5EYD7"/>
<dbReference type="KEGG" id="sea:SeAg_B0583"/>
<dbReference type="HOGENOM" id="CLU_013528_0_1_6"/>
<dbReference type="Proteomes" id="UP000008819">
    <property type="component" value="Chromosome"/>
</dbReference>
<dbReference type="GO" id="GO:0005829">
    <property type="term" value="C:cytosol"/>
    <property type="evidence" value="ECO:0007669"/>
    <property type="project" value="TreeGrafter"/>
</dbReference>
<dbReference type="GO" id="GO:0005524">
    <property type="term" value="F:ATP binding"/>
    <property type="evidence" value="ECO:0007669"/>
    <property type="project" value="UniProtKB-UniRule"/>
</dbReference>
<dbReference type="GO" id="GO:0004817">
    <property type="term" value="F:cysteine-tRNA ligase activity"/>
    <property type="evidence" value="ECO:0007669"/>
    <property type="project" value="UniProtKB-UniRule"/>
</dbReference>
<dbReference type="GO" id="GO:0008270">
    <property type="term" value="F:zinc ion binding"/>
    <property type="evidence" value="ECO:0007669"/>
    <property type="project" value="UniProtKB-UniRule"/>
</dbReference>
<dbReference type="GO" id="GO:0006423">
    <property type="term" value="P:cysteinyl-tRNA aminoacylation"/>
    <property type="evidence" value="ECO:0007669"/>
    <property type="project" value="UniProtKB-UniRule"/>
</dbReference>
<dbReference type="CDD" id="cd07963">
    <property type="entry name" value="Anticodon_Ia_Cys"/>
    <property type="match status" value="1"/>
</dbReference>
<dbReference type="CDD" id="cd00672">
    <property type="entry name" value="CysRS_core"/>
    <property type="match status" value="1"/>
</dbReference>
<dbReference type="FunFam" id="1.20.120.1910:FF:000001">
    <property type="entry name" value="Cysteine--tRNA ligase"/>
    <property type="match status" value="1"/>
</dbReference>
<dbReference type="FunFam" id="3.40.50.620:FF:000009">
    <property type="entry name" value="Cysteine--tRNA ligase"/>
    <property type="match status" value="1"/>
</dbReference>
<dbReference type="Gene3D" id="1.20.120.1910">
    <property type="entry name" value="Cysteine-tRNA ligase, C-terminal anti-codon recognition domain"/>
    <property type="match status" value="1"/>
</dbReference>
<dbReference type="Gene3D" id="3.40.50.620">
    <property type="entry name" value="HUPs"/>
    <property type="match status" value="1"/>
</dbReference>
<dbReference type="HAMAP" id="MF_00041">
    <property type="entry name" value="Cys_tRNA_synth"/>
    <property type="match status" value="1"/>
</dbReference>
<dbReference type="InterPro" id="IPR015803">
    <property type="entry name" value="Cys-tRNA-ligase"/>
</dbReference>
<dbReference type="InterPro" id="IPR015273">
    <property type="entry name" value="Cys-tRNA-synt_Ia_DALR"/>
</dbReference>
<dbReference type="InterPro" id="IPR024909">
    <property type="entry name" value="Cys-tRNA/MSH_ligase"/>
</dbReference>
<dbReference type="InterPro" id="IPR056411">
    <property type="entry name" value="CysS_C"/>
</dbReference>
<dbReference type="InterPro" id="IPR014729">
    <property type="entry name" value="Rossmann-like_a/b/a_fold"/>
</dbReference>
<dbReference type="InterPro" id="IPR032678">
    <property type="entry name" value="tRNA-synt_1_cat_dom"/>
</dbReference>
<dbReference type="InterPro" id="IPR009080">
    <property type="entry name" value="tRNAsynth_Ia_anticodon-bd"/>
</dbReference>
<dbReference type="NCBIfam" id="TIGR00435">
    <property type="entry name" value="cysS"/>
    <property type="match status" value="1"/>
</dbReference>
<dbReference type="PANTHER" id="PTHR10890:SF3">
    <property type="entry name" value="CYSTEINE--TRNA LIGASE, CYTOPLASMIC"/>
    <property type="match status" value="1"/>
</dbReference>
<dbReference type="PANTHER" id="PTHR10890">
    <property type="entry name" value="CYSTEINYL-TRNA SYNTHETASE"/>
    <property type="match status" value="1"/>
</dbReference>
<dbReference type="Pfam" id="PF23493">
    <property type="entry name" value="CysS_C"/>
    <property type="match status" value="1"/>
</dbReference>
<dbReference type="Pfam" id="PF09190">
    <property type="entry name" value="DALR_2"/>
    <property type="match status" value="1"/>
</dbReference>
<dbReference type="Pfam" id="PF01406">
    <property type="entry name" value="tRNA-synt_1e"/>
    <property type="match status" value="1"/>
</dbReference>
<dbReference type="PRINTS" id="PR00983">
    <property type="entry name" value="TRNASYNTHCYS"/>
</dbReference>
<dbReference type="SMART" id="SM00840">
    <property type="entry name" value="DALR_2"/>
    <property type="match status" value="1"/>
</dbReference>
<dbReference type="SUPFAM" id="SSF47323">
    <property type="entry name" value="Anticodon-binding domain of a subclass of class I aminoacyl-tRNA synthetases"/>
    <property type="match status" value="1"/>
</dbReference>
<dbReference type="SUPFAM" id="SSF52374">
    <property type="entry name" value="Nucleotidylyl transferase"/>
    <property type="match status" value="1"/>
</dbReference>
<gene>
    <name evidence="1" type="primary">cysS</name>
    <name type="ordered locus">SeAg_B0583</name>
</gene>
<reference key="1">
    <citation type="journal article" date="2011" name="J. Bacteriol.">
        <title>Comparative genomics of 28 Salmonella enterica isolates: evidence for CRISPR-mediated adaptive sublineage evolution.</title>
        <authorList>
            <person name="Fricke W.F."/>
            <person name="Mammel M.K."/>
            <person name="McDermott P.F."/>
            <person name="Tartera C."/>
            <person name="White D.G."/>
            <person name="Leclerc J.E."/>
            <person name="Ravel J."/>
            <person name="Cebula T.A."/>
        </authorList>
    </citation>
    <scope>NUCLEOTIDE SEQUENCE [LARGE SCALE GENOMIC DNA]</scope>
    <source>
        <strain>SL483</strain>
    </source>
</reference>
<feature type="chain" id="PRO_1000090865" description="Cysteine--tRNA ligase">
    <location>
        <begin position="1"/>
        <end position="461"/>
    </location>
</feature>
<feature type="short sequence motif" description="'HIGH' region">
    <location>
        <begin position="30"/>
        <end position="40"/>
    </location>
</feature>
<feature type="short sequence motif" description="'KMSKS' region">
    <location>
        <begin position="266"/>
        <end position="270"/>
    </location>
</feature>
<feature type="binding site" evidence="1">
    <location>
        <position position="28"/>
    </location>
    <ligand>
        <name>Zn(2+)</name>
        <dbReference type="ChEBI" id="CHEBI:29105"/>
    </ligand>
</feature>
<feature type="binding site" evidence="1">
    <location>
        <position position="209"/>
    </location>
    <ligand>
        <name>Zn(2+)</name>
        <dbReference type="ChEBI" id="CHEBI:29105"/>
    </ligand>
</feature>
<feature type="binding site" evidence="1">
    <location>
        <position position="234"/>
    </location>
    <ligand>
        <name>Zn(2+)</name>
        <dbReference type="ChEBI" id="CHEBI:29105"/>
    </ligand>
</feature>
<feature type="binding site" evidence="1">
    <location>
        <position position="238"/>
    </location>
    <ligand>
        <name>Zn(2+)</name>
        <dbReference type="ChEBI" id="CHEBI:29105"/>
    </ligand>
</feature>
<feature type="binding site" evidence="1">
    <location>
        <position position="269"/>
    </location>
    <ligand>
        <name>ATP</name>
        <dbReference type="ChEBI" id="CHEBI:30616"/>
    </ligand>
</feature>
<organism>
    <name type="scientific">Salmonella agona (strain SL483)</name>
    <dbReference type="NCBI Taxonomy" id="454166"/>
    <lineage>
        <taxon>Bacteria</taxon>
        <taxon>Pseudomonadati</taxon>
        <taxon>Pseudomonadota</taxon>
        <taxon>Gammaproteobacteria</taxon>
        <taxon>Enterobacterales</taxon>
        <taxon>Enterobacteriaceae</taxon>
        <taxon>Salmonella</taxon>
    </lineage>
</organism>
<keyword id="KW-0030">Aminoacyl-tRNA synthetase</keyword>
<keyword id="KW-0067">ATP-binding</keyword>
<keyword id="KW-0963">Cytoplasm</keyword>
<keyword id="KW-0436">Ligase</keyword>
<keyword id="KW-0479">Metal-binding</keyword>
<keyword id="KW-0547">Nucleotide-binding</keyword>
<keyword id="KW-0648">Protein biosynthesis</keyword>
<keyword id="KW-0862">Zinc</keyword>
<proteinExistence type="inferred from homology"/>
<protein>
    <recommendedName>
        <fullName evidence="1">Cysteine--tRNA ligase</fullName>
        <ecNumber evidence="1">6.1.1.16</ecNumber>
    </recommendedName>
    <alternativeName>
        <fullName evidence="1">Cysteinyl-tRNA synthetase</fullName>
        <shortName evidence="1">CysRS</shortName>
    </alternativeName>
</protein>
<name>SYC_SALA4</name>